<feature type="chain" id="PRO_0000435818" description="60S ribosomal export protein NMD3">
    <location>
        <begin position="1"/>
        <end position="518"/>
    </location>
</feature>
<feature type="region of interest" description="Disordered" evidence="2">
    <location>
        <begin position="473"/>
        <end position="518"/>
    </location>
</feature>
<feature type="short sequence motif" description="Nuclear localization signal" evidence="1">
    <location>
        <begin position="410"/>
        <end position="427"/>
    </location>
</feature>
<feature type="short sequence motif" description="Nuclear export signal" evidence="1">
    <location>
        <begin position="502"/>
        <end position="511"/>
    </location>
</feature>
<feature type="compositionally biased region" description="Acidic residues" evidence="2">
    <location>
        <begin position="504"/>
        <end position="518"/>
    </location>
</feature>
<reference key="1">
    <citation type="journal article" date="2011" name="Cell">
        <title>Insight into structure and assembly of the nuclear pore complex by utilizing the genome of a eukaryotic thermophile.</title>
        <authorList>
            <person name="Amlacher S."/>
            <person name="Sarges P."/>
            <person name="Flemming D."/>
            <person name="van Noort V."/>
            <person name="Kunze R."/>
            <person name="Devos D.P."/>
            <person name="Arumugam M."/>
            <person name="Bork P."/>
            <person name="Hurt E."/>
        </authorList>
    </citation>
    <scope>NUCLEOTIDE SEQUENCE [LARGE SCALE GENOMIC DNA]</scope>
    <source>
        <strain>DSM 1495 / CBS 144.50 / IMI 039719</strain>
    </source>
</reference>
<gene>
    <name type="primary">NMD3</name>
    <name type="ORF">CTHT_0031110</name>
</gene>
<evidence type="ECO:0000250" key="1">
    <source>
        <dbReference type="UniProtKB" id="P38861"/>
    </source>
</evidence>
<evidence type="ECO:0000256" key="2">
    <source>
        <dbReference type="SAM" id="MobiDB-lite"/>
    </source>
</evidence>
<evidence type="ECO:0000305" key="3"/>
<accession>G0S488</accession>
<comment type="function">
    <text evidence="1">Acts as an adapter for the XPO1/CRM1-mediated export of the 60S ribosomal subunit.</text>
</comment>
<comment type="subunit">
    <text evidence="1">Associates with the 60S ribosomal subunit.</text>
</comment>
<comment type="subcellular location">
    <subcellularLocation>
        <location evidence="1">Cytoplasm</location>
    </subcellularLocation>
    <subcellularLocation>
        <location evidence="1">Nucleus</location>
        <location evidence="1">Nucleoplasm</location>
    </subcellularLocation>
    <text evidence="1">Shuttles between the nucleus and the cytoplasm in a XPO1/CRM1-dependent manner.</text>
</comment>
<comment type="similarity">
    <text evidence="3">Belongs to the NMD3 family.</text>
</comment>
<comment type="sequence caution" evidence="3">
    <conflict type="erroneous initiation">
        <sequence resource="EMBL-CDS" id="EGS21262"/>
    </conflict>
    <text>Extended N-terminus.</text>
</comment>
<keyword id="KW-0175">Coiled coil</keyword>
<keyword id="KW-0963">Cytoplasm</keyword>
<keyword id="KW-0539">Nucleus</keyword>
<keyword id="KW-0653">Protein transport</keyword>
<keyword id="KW-1185">Reference proteome</keyword>
<keyword id="KW-0813">Transport</keyword>
<sequence>MDLDSPMGMAPMMGTARTGATILCCNCGVPIDGTSSAGALCYDCIKSTVDISQGIQREGTLHFCRDCERWLMPPSTWVAAAPESRELLSLCLKRLRNLGRVRIIDARFVWTEPHSRRIKVKITIQDQVSDGVLMQQSFEVVYVVAYQQCRECAKSYTANVWRAVVQVRQKVTHKRTFLLLEQLILKHQAHKDTINIKEEKDGVDFFFAQRNQAEAFVHFLKSVVPITLKDSRHLISQDTHTGDKQYKFTYSAEIIPICRDDLVALPLKLAKQIGNIPPLCLCYRIGTAVYLLDPNTLHTAELSSDVYWRQPFRPLADATSMVEFIVMDIEATGIRKGKWVLAEVTVARASDLGVNDNVYFTRTHLGHLLHPGDSVMGYMLTGTNFNSDTFDAIENSRQYGSTIPDVVLVKKHYPNRRRNRRRNWKLKRLPKDEGELLPKATDQARMDDEYEAFLRDVEEDEELRATLALYKNTRKTKKPQQDADAMSIAETEDDDDGPKISMDELLDDFEDLDIQDDQ</sequence>
<proteinExistence type="inferred from homology"/>
<name>NMD3_CHATD</name>
<dbReference type="EMBL" id="GL988041">
    <property type="protein sequence ID" value="EGS21262.1"/>
    <property type="status" value="ALT_INIT"/>
    <property type="molecule type" value="Genomic_DNA"/>
</dbReference>
<dbReference type="RefSeq" id="XP_006693558.1">
    <property type="nucleotide sequence ID" value="XM_006693495.1"/>
</dbReference>
<dbReference type="SMR" id="G0S488"/>
<dbReference type="STRING" id="759272.G0S488"/>
<dbReference type="GeneID" id="18257149"/>
<dbReference type="KEGG" id="cthr:CTHT_0031110"/>
<dbReference type="eggNOG" id="KOG2613">
    <property type="taxonomic scope" value="Eukaryota"/>
</dbReference>
<dbReference type="eggNOG" id="KOG4234">
    <property type="taxonomic scope" value="Eukaryota"/>
</dbReference>
<dbReference type="HOGENOM" id="CLU_018005_0_0_1"/>
<dbReference type="OrthoDB" id="203821at2759"/>
<dbReference type="Proteomes" id="UP000008066">
    <property type="component" value="Unassembled WGS sequence"/>
</dbReference>
<dbReference type="GO" id="GO:0005737">
    <property type="term" value="C:cytoplasm"/>
    <property type="evidence" value="ECO:0007669"/>
    <property type="project" value="UniProtKB-SubCell"/>
</dbReference>
<dbReference type="GO" id="GO:0005654">
    <property type="term" value="C:nucleoplasm"/>
    <property type="evidence" value="ECO:0007669"/>
    <property type="project" value="UniProtKB-SubCell"/>
</dbReference>
<dbReference type="GO" id="GO:0043023">
    <property type="term" value="F:ribosomal large subunit binding"/>
    <property type="evidence" value="ECO:0007669"/>
    <property type="project" value="InterPro"/>
</dbReference>
<dbReference type="GO" id="GO:0015031">
    <property type="term" value="P:protein transport"/>
    <property type="evidence" value="ECO:0007669"/>
    <property type="project" value="UniProtKB-KW"/>
</dbReference>
<dbReference type="GO" id="GO:0000055">
    <property type="term" value="P:ribosomal large subunit export from nucleus"/>
    <property type="evidence" value="ECO:0007669"/>
    <property type="project" value="TreeGrafter"/>
</dbReference>
<dbReference type="InterPro" id="IPR039768">
    <property type="entry name" value="Nmd3"/>
</dbReference>
<dbReference type="InterPro" id="IPR007064">
    <property type="entry name" value="Nmd3_N"/>
</dbReference>
<dbReference type="InterPro" id="IPR048898">
    <property type="entry name" value="NMD3_OB"/>
</dbReference>
<dbReference type="InterPro" id="IPR048899">
    <property type="entry name" value="NMD_SH3"/>
</dbReference>
<dbReference type="PANTHER" id="PTHR12746:SF2">
    <property type="entry name" value="60S RIBOSOMAL EXPORT PROTEIN NMD3"/>
    <property type="match status" value="1"/>
</dbReference>
<dbReference type="PANTHER" id="PTHR12746">
    <property type="entry name" value="NONSENSE-MEDIATED MRNA DECAY PROTEIN 3"/>
    <property type="match status" value="1"/>
</dbReference>
<dbReference type="Pfam" id="PF04981">
    <property type="entry name" value="NMD3"/>
    <property type="match status" value="1"/>
</dbReference>
<dbReference type="Pfam" id="PF21192">
    <property type="entry name" value="NMD3_OB"/>
    <property type="match status" value="1"/>
</dbReference>
<dbReference type="Pfam" id="PF21193">
    <property type="entry name" value="NMD_SH3"/>
    <property type="match status" value="1"/>
</dbReference>
<protein>
    <recommendedName>
        <fullName>60S ribosomal export protein NMD3</fullName>
    </recommendedName>
</protein>
<organism>
    <name type="scientific">Chaetomium thermophilum (strain DSM 1495 / CBS 144.50 / IMI 039719)</name>
    <name type="common">Thermochaetoides thermophila</name>
    <dbReference type="NCBI Taxonomy" id="759272"/>
    <lineage>
        <taxon>Eukaryota</taxon>
        <taxon>Fungi</taxon>
        <taxon>Dikarya</taxon>
        <taxon>Ascomycota</taxon>
        <taxon>Pezizomycotina</taxon>
        <taxon>Sordariomycetes</taxon>
        <taxon>Sordariomycetidae</taxon>
        <taxon>Sordariales</taxon>
        <taxon>Chaetomiaceae</taxon>
        <taxon>Thermochaetoides</taxon>
    </lineage>
</organism>